<organism>
    <name type="scientific">Pseudomonas savastanoi pv. phaseolicola (strain 1448A / Race 6)</name>
    <name type="common">Pseudomonas syringae pv. phaseolicola (strain 1448A / Race 6)</name>
    <dbReference type="NCBI Taxonomy" id="264730"/>
    <lineage>
        <taxon>Bacteria</taxon>
        <taxon>Pseudomonadati</taxon>
        <taxon>Pseudomonadota</taxon>
        <taxon>Gammaproteobacteria</taxon>
        <taxon>Pseudomonadales</taxon>
        <taxon>Pseudomonadaceae</taxon>
        <taxon>Pseudomonas</taxon>
    </lineage>
</organism>
<gene>
    <name evidence="1" type="primary">murB</name>
    <name type="ordered locus">PSPPH_1631</name>
</gene>
<name>MURB_PSE14</name>
<keyword id="KW-0131">Cell cycle</keyword>
<keyword id="KW-0132">Cell division</keyword>
<keyword id="KW-0133">Cell shape</keyword>
<keyword id="KW-0961">Cell wall biogenesis/degradation</keyword>
<keyword id="KW-0963">Cytoplasm</keyword>
<keyword id="KW-0274">FAD</keyword>
<keyword id="KW-0285">Flavoprotein</keyword>
<keyword id="KW-0521">NADP</keyword>
<keyword id="KW-0560">Oxidoreductase</keyword>
<keyword id="KW-0573">Peptidoglycan synthesis</keyword>
<reference key="1">
    <citation type="journal article" date="2005" name="J. Bacteriol.">
        <title>Whole-genome sequence analysis of Pseudomonas syringae pv. phaseolicola 1448A reveals divergence among pathovars in genes involved in virulence and transposition.</title>
        <authorList>
            <person name="Joardar V."/>
            <person name="Lindeberg M."/>
            <person name="Jackson R.W."/>
            <person name="Selengut J."/>
            <person name="Dodson R."/>
            <person name="Brinkac L.M."/>
            <person name="Daugherty S.C."/>
            <person name="DeBoy R.T."/>
            <person name="Durkin A.S."/>
            <person name="Gwinn Giglio M."/>
            <person name="Madupu R."/>
            <person name="Nelson W.C."/>
            <person name="Rosovitz M.J."/>
            <person name="Sullivan S.A."/>
            <person name="Crabtree J."/>
            <person name="Creasy T."/>
            <person name="Davidsen T.M."/>
            <person name="Haft D.H."/>
            <person name="Zafar N."/>
            <person name="Zhou L."/>
            <person name="Halpin R."/>
            <person name="Holley T."/>
            <person name="Khouri H.M."/>
            <person name="Feldblyum T.V."/>
            <person name="White O."/>
            <person name="Fraser C.M."/>
            <person name="Chatterjee A.K."/>
            <person name="Cartinhour S."/>
            <person name="Schneider D."/>
            <person name="Mansfield J.W."/>
            <person name="Collmer A."/>
            <person name="Buell R."/>
        </authorList>
    </citation>
    <scope>NUCLEOTIDE SEQUENCE [LARGE SCALE GENOMIC DNA]</scope>
    <source>
        <strain>1448A / Race 6</strain>
    </source>
</reference>
<evidence type="ECO:0000255" key="1">
    <source>
        <dbReference type="HAMAP-Rule" id="MF_00037"/>
    </source>
</evidence>
<proteinExistence type="inferred from homology"/>
<sequence length="339" mass="37327">MTLQVQSAISLKPFNTFGVDVQARLFAEAHSDDDVREALAYSVEHDVSLLVIGGGSNLLLSGDVQSLVLRMASRGIRIVHEDCLESIVEAEAGEPWHPFVQSCLELGLAGLENLSLIPGTVGAAPMQNIGAYGVEIKDVFHSLTALDRETGELREFSLEDCAFGYRDSVFKHQVARWLILRVRFKLSRVANLHLEYGPVRQRLDELGIDKPTPFDVSRAICAIRSEKLPDPAVLGNAGSFFKNPIIPAQLYATIKQQHPGVVGYPQDDGRVKLAAGWLIEQAGWKGYRDGDAGVHKLQSLVLVNYGQASGLQLLNLARRIQSDIVERFGVELEMEPNLY</sequence>
<accession>Q48L51</accession>
<feature type="chain" id="PRO_0000224709" description="UDP-N-acetylenolpyruvoylglucosamine reductase">
    <location>
        <begin position="1"/>
        <end position="339"/>
    </location>
</feature>
<feature type="domain" description="FAD-binding PCMH-type" evidence="1">
    <location>
        <begin position="19"/>
        <end position="189"/>
    </location>
</feature>
<feature type="active site" evidence="1">
    <location>
        <position position="166"/>
    </location>
</feature>
<feature type="active site" description="Proton donor" evidence="1">
    <location>
        <position position="239"/>
    </location>
</feature>
<feature type="active site" evidence="1">
    <location>
        <position position="335"/>
    </location>
</feature>
<dbReference type="EC" id="1.3.1.98" evidence="1"/>
<dbReference type="EMBL" id="CP000058">
    <property type="protein sequence ID" value="AAZ36162.1"/>
    <property type="molecule type" value="Genomic_DNA"/>
</dbReference>
<dbReference type="RefSeq" id="WP_004657846.1">
    <property type="nucleotide sequence ID" value="NC_005773.3"/>
</dbReference>
<dbReference type="SMR" id="Q48L51"/>
<dbReference type="KEGG" id="psp:PSPPH_1631"/>
<dbReference type="eggNOG" id="COG0812">
    <property type="taxonomic scope" value="Bacteria"/>
</dbReference>
<dbReference type="HOGENOM" id="CLU_035304_0_0_6"/>
<dbReference type="UniPathway" id="UPA00219"/>
<dbReference type="Proteomes" id="UP000000551">
    <property type="component" value="Chromosome"/>
</dbReference>
<dbReference type="GO" id="GO:0005829">
    <property type="term" value="C:cytosol"/>
    <property type="evidence" value="ECO:0007669"/>
    <property type="project" value="TreeGrafter"/>
</dbReference>
<dbReference type="GO" id="GO:0071949">
    <property type="term" value="F:FAD binding"/>
    <property type="evidence" value="ECO:0007669"/>
    <property type="project" value="InterPro"/>
</dbReference>
<dbReference type="GO" id="GO:0008762">
    <property type="term" value="F:UDP-N-acetylmuramate dehydrogenase activity"/>
    <property type="evidence" value="ECO:0007669"/>
    <property type="project" value="UniProtKB-UniRule"/>
</dbReference>
<dbReference type="GO" id="GO:0051301">
    <property type="term" value="P:cell division"/>
    <property type="evidence" value="ECO:0007669"/>
    <property type="project" value="UniProtKB-KW"/>
</dbReference>
<dbReference type="GO" id="GO:0071555">
    <property type="term" value="P:cell wall organization"/>
    <property type="evidence" value="ECO:0007669"/>
    <property type="project" value="UniProtKB-KW"/>
</dbReference>
<dbReference type="GO" id="GO:0009252">
    <property type="term" value="P:peptidoglycan biosynthetic process"/>
    <property type="evidence" value="ECO:0007669"/>
    <property type="project" value="UniProtKB-UniRule"/>
</dbReference>
<dbReference type="GO" id="GO:0008360">
    <property type="term" value="P:regulation of cell shape"/>
    <property type="evidence" value="ECO:0007669"/>
    <property type="project" value="UniProtKB-KW"/>
</dbReference>
<dbReference type="Gene3D" id="3.30.465.10">
    <property type="match status" value="1"/>
</dbReference>
<dbReference type="Gene3D" id="3.90.78.10">
    <property type="entry name" value="UDP-N-acetylenolpyruvoylglucosamine reductase, C-terminal domain"/>
    <property type="match status" value="1"/>
</dbReference>
<dbReference type="Gene3D" id="3.30.43.10">
    <property type="entry name" value="Uridine Diphospho-n-acetylenolpyruvylglucosamine Reductase, domain 2"/>
    <property type="match status" value="1"/>
</dbReference>
<dbReference type="HAMAP" id="MF_00037">
    <property type="entry name" value="MurB"/>
    <property type="match status" value="1"/>
</dbReference>
<dbReference type="InterPro" id="IPR016166">
    <property type="entry name" value="FAD-bd_PCMH"/>
</dbReference>
<dbReference type="InterPro" id="IPR036318">
    <property type="entry name" value="FAD-bd_PCMH-like_sf"/>
</dbReference>
<dbReference type="InterPro" id="IPR016167">
    <property type="entry name" value="FAD-bd_PCMH_sub1"/>
</dbReference>
<dbReference type="InterPro" id="IPR016169">
    <property type="entry name" value="FAD-bd_PCMH_sub2"/>
</dbReference>
<dbReference type="InterPro" id="IPR003170">
    <property type="entry name" value="MurB"/>
</dbReference>
<dbReference type="InterPro" id="IPR011601">
    <property type="entry name" value="MurB_C"/>
</dbReference>
<dbReference type="InterPro" id="IPR036635">
    <property type="entry name" value="MurB_C_sf"/>
</dbReference>
<dbReference type="InterPro" id="IPR006094">
    <property type="entry name" value="Oxid_FAD_bind_N"/>
</dbReference>
<dbReference type="NCBIfam" id="TIGR00179">
    <property type="entry name" value="murB"/>
    <property type="match status" value="1"/>
</dbReference>
<dbReference type="NCBIfam" id="NF000755">
    <property type="entry name" value="PRK00046.1"/>
    <property type="match status" value="1"/>
</dbReference>
<dbReference type="NCBIfam" id="NF010478">
    <property type="entry name" value="PRK13903.1"/>
    <property type="match status" value="1"/>
</dbReference>
<dbReference type="PANTHER" id="PTHR21071">
    <property type="entry name" value="UDP-N-ACETYLENOLPYRUVOYLGLUCOSAMINE REDUCTASE"/>
    <property type="match status" value="1"/>
</dbReference>
<dbReference type="PANTHER" id="PTHR21071:SF4">
    <property type="entry name" value="UDP-N-ACETYLENOLPYRUVOYLGLUCOSAMINE REDUCTASE"/>
    <property type="match status" value="1"/>
</dbReference>
<dbReference type="Pfam" id="PF01565">
    <property type="entry name" value="FAD_binding_4"/>
    <property type="match status" value="1"/>
</dbReference>
<dbReference type="Pfam" id="PF02873">
    <property type="entry name" value="MurB_C"/>
    <property type="match status" value="1"/>
</dbReference>
<dbReference type="SUPFAM" id="SSF56176">
    <property type="entry name" value="FAD-binding/transporter-associated domain-like"/>
    <property type="match status" value="1"/>
</dbReference>
<dbReference type="SUPFAM" id="SSF56194">
    <property type="entry name" value="Uridine diphospho-N-Acetylenolpyruvylglucosamine reductase, MurB, C-terminal domain"/>
    <property type="match status" value="1"/>
</dbReference>
<dbReference type="PROSITE" id="PS51387">
    <property type="entry name" value="FAD_PCMH"/>
    <property type="match status" value="1"/>
</dbReference>
<protein>
    <recommendedName>
        <fullName evidence="1">UDP-N-acetylenolpyruvoylglucosamine reductase</fullName>
        <ecNumber evidence="1">1.3.1.98</ecNumber>
    </recommendedName>
    <alternativeName>
        <fullName evidence="1">UDP-N-acetylmuramate dehydrogenase</fullName>
    </alternativeName>
</protein>
<comment type="function">
    <text evidence="1">Cell wall formation.</text>
</comment>
<comment type="catalytic activity">
    <reaction evidence="1">
        <text>UDP-N-acetyl-alpha-D-muramate + NADP(+) = UDP-N-acetyl-3-O-(1-carboxyvinyl)-alpha-D-glucosamine + NADPH + H(+)</text>
        <dbReference type="Rhea" id="RHEA:12248"/>
        <dbReference type="ChEBI" id="CHEBI:15378"/>
        <dbReference type="ChEBI" id="CHEBI:57783"/>
        <dbReference type="ChEBI" id="CHEBI:58349"/>
        <dbReference type="ChEBI" id="CHEBI:68483"/>
        <dbReference type="ChEBI" id="CHEBI:70757"/>
        <dbReference type="EC" id="1.3.1.98"/>
    </reaction>
</comment>
<comment type="cofactor">
    <cofactor evidence="1">
        <name>FAD</name>
        <dbReference type="ChEBI" id="CHEBI:57692"/>
    </cofactor>
</comment>
<comment type="pathway">
    <text evidence="1">Cell wall biogenesis; peptidoglycan biosynthesis.</text>
</comment>
<comment type="subcellular location">
    <subcellularLocation>
        <location evidence="1">Cytoplasm</location>
    </subcellularLocation>
</comment>
<comment type="similarity">
    <text evidence="1">Belongs to the MurB family.</text>
</comment>